<organism>
    <name type="scientific">Petrotoga mobilis (strain DSM 10674 / SJ95)</name>
    <dbReference type="NCBI Taxonomy" id="403833"/>
    <lineage>
        <taxon>Bacteria</taxon>
        <taxon>Thermotogati</taxon>
        <taxon>Thermotogota</taxon>
        <taxon>Thermotogae</taxon>
        <taxon>Petrotogales</taxon>
        <taxon>Petrotogaceae</taxon>
        <taxon>Petrotoga</taxon>
    </lineage>
</organism>
<proteinExistence type="inferred from homology"/>
<comment type="function">
    <text evidence="1">Binds 23S rRNA and is also seen to make contacts with the A and possibly P site tRNAs.</text>
</comment>
<comment type="subunit">
    <text evidence="1">Part of the 50S ribosomal subunit.</text>
</comment>
<comment type="similarity">
    <text evidence="1">Belongs to the universal ribosomal protein uL16 family.</text>
</comment>
<gene>
    <name evidence="1" type="primary">rplP</name>
    <name type="ordered locus">Pmob_0783</name>
</gene>
<accession>A9BH98</accession>
<dbReference type="EMBL" id="CP000879">
    <property type="protein sequence ID" value="ABX31507.1"/>
    <property type="molecule type" value="Genomic_DNA"/>
</dbReference>
<dbReference type="RefSeq" id="WP_012208610.1">
    <property type="nucleotide sequence ID" value="NC_010003.1"/>
</dbReference>
<dbReference type="SMR" id="A9BH98"/>
<dbReference type="STRING" id="403833.Pmob_0783"/>
<dbReference type="KEGG" id="pmo:Pmob_0783"/>
<dbReference type="eggNOG" id="COG0197">
    <property type="taxonomic scope" value="Bacteria"/>
</dbReference>
<dbReference type="HOGENOM" id="CLU_078858_2_1_0"/>
<dbReference type="OrthoDB" id="9802589at2"/>
<dbReference type="Proteomes" id="UP000000789">
    <property type="component" value="Chromosome"/>
</dbReference>
<dbReference type="GO" id="GO:0022625">
    <property type="term" value="C:cytosolic large ribosomal subunit"/>
    <property type="evidence" value="ECO:0007669"/>
    <property type="project" value="TreeGrafter"/>
</dbReference>
<dbReference type="GO" id="GO:0019843">
    <property type="term" value="F:rRNA binding"/>
    <property type="evidence" value="ECO:0007669"/>
    <property type="project" value="UniProtKB-UniRule"/>
</dbReference>
<dbReference type="GO" id="GO:0003735">
    <property type="term" value="F:structural constituent of ribosome"/>
    <property type="evidence" value="ECO:0007669"/>
    <property type="project" value="InterPro"/>
</dbReference>
<dbReference type="GO" id="GO:0000049">
    <property type="term" value="F:tRNA binding"/>
    <property type="evidence" value="ECO:0007669"/>
    <property type="project" value="UniProtKB-KW"/>
</dbReference>
<dbReference type="GO" id="GO:0006412">
    <property type="term" value="P:translation"/>
    <property type="evidence" value="ECO:0007669"/>
    <property type="project" value="UniProtKB-UniRule"/>
</dbReference>
<dbReference type="CDD" id="cd01433">
    <property type="entry name" value="Ribosomal_L16_L10e"/>
    <property type="match status" value="1"/>
</dbReference>
<dbReference type="FunFam" id="3.90.1170.10:FF:000001">
    <property type="entry name" value="50S ribosomal protein L16"/>
    <property type="match status" value="1"/>
</dbReference>
<dbReference type="Gene3D" id="3.90.1170.10">
    <property type="entry name" value="Ribosomal protein L10e/L16"/>
    <property type="match status" value="1"/>
</dbReference>
<dbReference type="HAMAP" id="MF_01342">
    <property type="entry name" value="Ribosomal_uL16"/>
    <property type="match status" value="1"/>
</dbReference>
<dbReference type="InterPro" id="IPR047873">
    <property type="entry name" value="Ribosomal_uL16"/>
</dbReference>
<dbReference type="InterPro" id="IPR000114">
    <property type="entry name" value="Ribosomal_uL16_bact-type"/>
</dbReference>
<dbReference type="InterPro" id="IPR016180">
    <property type="entry name" value="Ribosomal_uL16_dom"/>
</dbReference>
<dbReference type="InterPro" id="IPR036920">
    <property type="entry name" value="Ribosomal_uL16_sf"/>
</dbReference>
<dbReference type="NCBIfam" id="TIGR01164">
    <property type="entry name" value="rplP_bact"/>
    <property type="match status" value="1"/>
</dbReference>
<dbReference type="PANTHER" id="PTHR12220">
    <property type="entry name" value="50S/60S RIBOSOMAL PROTEIN L16"/>
    <property type="match status" value="1"/>
</dbReference>
<dbReference type="PANTHER" id="PTHR12220:SF13">
    <property type="entry name" value="LARGE RIBOSOMAL SUBUNIT PROTEIN UL16M"/>
    <property type="match status" value="1"/>
</dbReference>
<dbReference type="Pfam" id="PF00252">
    <property type="entry name" value="Ribosomal_L16"/>
    <property type="match status" value="1"/>
</dbReference>
<dbReference type="PRINTS" id="PR00060">
    <property type="entry name" value="RIBOSOMALL16"/>
</dbReference>
<dbReference type="SUPFAM" id="SSF54686">
    <property type="entry name" value="Ribosomal protein L16p/L10e"/>
    <property type="match status" value="1"/>
</dbReference>
<evidence type="ECO:0000255" key="1">
    <source>
        <dbReference type="HAMAP-Rule" id="MF_01342"/>
    </source>
</evidence>
<evidence type="ECO:0000305" key="2"/>
<keyword id="KW-0687">Ribonucleoprotein</keyword>
<keyword id="KW-0689">Ribosomal protein</keyword>
<keyword id="KW-0694">RNA-binding</keyword>
<keyword id="KW-0699">rRNA-binding</keyword>
<keyword id="KW-0820">tRNA-binding</keyword>
<sequence>MLMPKRVKYRKQQRGTVRGMTKGASLVHFGDWGLKAMESSWITAQQIEACRLSMVRTLKRTGNIWINIFPDKPITSKGIGTRQGKGKGDVEGWVAVVKKGRVMFEIGGVDEATAKRALEYAASKLPIRTKIVQRYEIGGEL</sequence>
<reference key="1">
    <citation type="submission" date="2007-11" db="EMBL/GenBank/DDBJ databases">
        <title>Complete sequence of Petroga mobilis SJ95.</title>
        <authorList>
            <consortium name="US DOE Joint Genome Institute"/>
            <person name="Copeland A."/>
            <person name="Lucas S."/>
            <person name="Lapidus A."/>
            <person name="Barry K."/>
            <person name="Glavina del Rio T."/>
            <person name="Dalin E."/>
            <person name="Tice H."/>
            <person name="Pitluck S."/>
            <person name="Meincke L."/>
            <person name="Brettin T."/>
            <person name="Bruce D."/>
            <person name="Detter J.C."/>
            <person name="Han C."/>
            <person name="Kuske C.R."/>
            <person name="Schmutz J."/>
            <person name="Larimer F."/>
            <person name="Land M."/>
            <person name="Hauser L."/>
            <person name="Kyrpides N."/>
            <person name="Mikhailova N."/>
            <person name="Noll K."/>
            <person name="Richardson P."/>
        </authorList>
    </citation>
    <scope>NUCLEOTIDE SEQUENCE [LARGE SCALE GENOMIC DNA]</scope>
    <source>
        <strain>DSM 10674 / SJ95</strain>
    </source>
</reference>
<feature type="chain" id="PRO_1000086767" description="Large ribosomal subunit protein uL16">
    <location>
        <begin position="1"/>
        <end position="141"/>
    </location>
</feature>
<protein>
    <recommendedName>
        <fullName evidence="1">Large ribosomal subunit protein uL16</fullName>
    </recommendedName>
    <alternativeName>
        <fullName evidence="2">50S ribosomal protein L16</fullName>
    </alternativeName>
</protein>
<name>RL16_PETMO</name>